<dbReference type="EMBL" id="CP000860">
    <property type="protein sequence ID" value="ACA58811.1"/>
    <property type="molecule type" value="Genomic_DNA"/>
</dbReference>
<dbReference type="RefSeq" id="WP_012301403.1">
    <property type="nucleotide sequence ID" value="NC_010424.1"/>
</dbReference>
<dbReference type="SMR" id="B1I1M4"/>
<dbReference type="STRING" id="477974.Daud_0250"/>
<dbReference type="KEGG" id="dau:Daud_0250"/>
<dbReference type="eggNOG" id="COG0099">
    <property type="taxonomic scope" value="Bacteria"/>
</dbReference>
<dbReference type="HOGENOM" id="CLU_103849_1_2_9"/>
<dbReference type="OrthoDB" id="9803610at2"/>
<dbReference type="Proteomes" id="UP000008544">
    <property type="component" value="Chromosome"/>
</dbReference>
<dbReference type="GO" id="GO:0005829">
    <property type="term" value="C:cytosol"/>
    <property type="evidence" value="ECO:0007669"/>
    <property type="project" value="TreeGrafter"/>
</dbReference>
<dbReference type="GO" id="GO:0015935">
    <property type="term" value="C:small ribosomal subunit"/>
    <property type="evidence" value="ECO:0007669"/>
    <property type="project" value="TreeGrafter"/>
</dbReference>
<dbReference type="GO" id="GO:0019843">
    <property type="term" value="F:rRNA binding"/>
    <property type="evidence" value="ECO:0007669"/>
    <property type="project" value="UniProtKB-UniRule"/>
</dbReference>
<dbReference type="GO" id="GO:0003735">
    <property type="term" value="F:structural constituent of ribosome"/>
    <property type="evidence" value="ECO:0007669"/>
    <property type="project" value="InterPro"/>
</dbReference>
<dbReference type="GO" id="GO:0000049">
    <property type="term" value="F:tRNA binding"/>
    <property type="evidence" value="ECO:0007669"/>
    <property type="project" value="UniProtKB-UniRule"/>
</dbReference>
<dbReference type="GO" id="GO:0006412">
    <property type="term" value="P:translation"/>
    <property type="evidence" value="ECO:0007669"/>
    <property type="project" value="UniProtKB-UniRule"/>
</dbReference>
<dbReference type="FunFam" id="1.10.8.50:FF:000001">
    <property type="entry name" value="30S ribosomal protein S13"/>
    <property type="match status" value="1"/>
</dbReference>
<dbReference type="FunFam" id="4.10.910.10:FF:000001">
    <property type="entry name" value="30S ribosomal protein S13"/>
    <property type="match status" value="1"/>
</dbReference>
<dbReference type="Gene3D" id="1.10.8.50">
    <property type="match status" value="1"/>
</dbReference>
<dbReference type="Gene3D" id="4.10.910.10">
    <property type="entry name" value="30s ribosomal protein s13, domain 2"/>
    <property type="match status" value="1"/>
</dbReference>
<dbReference type="HAMAP" id="MF_01315">
    <property type="entry name" value="Ribosomal_uS13"/>
    <property type="match status" value="1"/>
</dbReference>
<dbReference type="InterPro" id="IPR027437">
    <property type="entry name" value="Rbsml_uS13_C"/>
</dbReference>
<dbReference type="InterPro" id="IPR001892">
    <property type="entry name" value="Ribosomal_uS13"/>
</dbReference>
<dbReference type="InterPro" id="IPR010979">
    <property type="entry name" value="Ribosomal_uS13-like_H2TH"/>
</dbReference>
<dbReference type="InterPro" id="IPR019980">
    <property type="entry name" value="Ribosomal_uS13_bac-type"/>
</dbReference>
<dbReference type="NCBIfam" id="TIGR03631">
    <property type="entry name" value="uS13_bact"/>
    <property type="match status" value="1"/>
</dbReference>
<dbReference type="PANTHER" id="PTHR10871">
    <property type="entry name" value="30S RIBOSOMAL PROTEIN S13/40S RIBOSOMAL PROTEIN S18"/>
    <property type="match status" value="1"/>
</dbReference>
<dbReference type="PANTHER" id="PTHR10871:SF1">
    <property type="entry name" value="SMALL RIBOSOMAL SUBUNIT PROTEIN US13M"/>
    <property type="match status" value="1"/>
</dbReference>
<dbReference type="Pfam" id="PF00416">
    <property type="entry name" value="Ribosomal_S13"/>
    <property type="match status" value="1"/>
</dbReference>
<dbReference type="PIRSF" id="PIRSF002134">
    <property type="entry name" value="Ribosomal_S13"/>
    <property type="match status" value="1"/>
</dbReference>
<dbReference type="SUPFAM" id="SSF46946">
    <property type="entry name" value="S13-like H2TH domain"/>
    <property type="match status" value="1"/>
</dbReference>
<dbReference type="PROSITE" id="PS50159">
    <property type="entry name" value="RIBOSOMAL_S13_2"/>
    <property type="match status" value="1"/>
</dbReference>
<gene>
    <name evidence="1" type="primary">rpsM</name>
    <name type="ordered locus">Daud_0250</name>
</gene>
<name>RS13_DESAP</name>
<feature type="chain" id="PRO_1000141255" description="Small ribosomal subunit protein uS13">
    <location>
        <begin position="1"/>
        <end position="123"/>
    </location>
</feature>
<feature type="region of interest" description="Disordered" evidence="2">
    <location>
        <begin position="103"/>
        <end position="123"/>
    </location>
</feature>
<feature type="compositionally biased region" description="Basic residues" evidence="2">
    <location>
        <begin position="105"/>
        <end position="123"/>
    </location>
</feature>
<comment type="function">
    <text evidence="1">Located at the top of the head of the 30S subunit, it contacts several helices of the 16S rRNA. In the 70S ribosome it contacts the 23S rRNA (bridge B1a) and protein L5 of the 50S subunit (bridge B1b), connecting the 2 subunits; these bridges are implicated in subunit movement. Contacts the tRNAs in the A and P-sites.</text>
</comment>
<comment type="subunit">
    <text evidence="1">Part of the 30S ribosomal subunit. Forms a loose heterodimer with protein S19. Forms two bridges to the 50S subunit in the 70S ribosome.</text>
</comment>
<comment type="similarity">
    <text evidence="1">Belongs to the universal ribosomal protein uS13 family.</text>
</comment>
<reference key="1">
    <citation type="submission" date="2007-10" db="EMBL/GenBank/DDBJ databases">
        <title>Complete sequence of chromosome of Desulforudis audaxviator MP104C.</title>
        <authorList>
            <person name="Copeland A."/>
            <person name="Lucas S."/>
            <person name="Lapidus A."/>
            <person name="Barry K."/>
            <person name="Glavina del Rio T."/>
            <person name="Dalin E."/>
            <person name="Tice H."/>
            <person name="Bruce D."/>
            <person name="Pitluck S."/>
            <person name="Lowry S.R."/>
            <person name="Larimer F."/>
            <person name="Land M.L."/>
            <person name="Hauser L."/>
            <person name="Kyrpides N."/>
            <person name="Ivanova N.N."/>
            <person name="Richardson P."/>
        </authorList>
    </citation>
    <scope>NUCLEOTIDE SEQUENCE [LARGE SCALE GENOMIC DNA]</scope>
    <source>
        <strain>MP104C</strain>
    </source>
</reference>
<sequence length="123" mass="14337">MARISGVDLPRDKRVEVALTYIYGIGRSSAKQLLEQVNVNPETRVRDLTEEEISRLRDLIDKEYKVEGDLRREVSLNIKRLIEIGSYRGLRHRRGLPVWGQRTRTNARTRKGPKKTVGVRRKK</sequence>
<organism>
    <name type="scientific">Desulforudis audaxviator (strain MP104C)</name>
    <dbReference type="NCBI Taxonomy" id="477974"/>
    <lineage>
        <taxon>Bacteria</taxon>
        <taxon>Bacillati</taxon>
        <taxon>Bacillota</taxon>
        <taxon>Clostridia</taxon>
        <taxon>Thermoanaerobacterales</taxon>
        <taxon>Candidatus Desulforudaceae</taxon>
        <taxon>Candidatus Desulforudis</taxon>
    </lineage>
</organism>
<keyword id="KW-1185">Reference proteome</keyword>
<keyword id="KW-0687">Ribonucleoprotein</keyword>
<keyword id="KW-0689">Ribosomal protein</keyword>
<keyword id="KW-0694">RNA-binding</keyword>
<keyword id="KW-0699">rRNA-binding</keyword>
<keyword id="KW-0820">tRNA-binding</keyword>
<accession>B1I1M4</accession>
<protein>
    <recommendedName>
        <fullName evidence="1">Small ribosomal subunit protein uS13</fullName>
    </recommendedName>
    <alternativeName>
        <fullName evidence="3">30S ribosomal protein S13</fullName>
    </alternativeName>
</protein>
<evidence type="ECO:0000255" key="1">
    <source>
        <dbReference type="HAMAP-Rule" id="MF_01315"/>
    </source>
</evidence>
<evidence type="ECO:0000256" key="2">
    <source>
        <dbReference type="SAM" id="MobiDB-lite"/>
    </source>
</evidence>
<evidence type="ECO:0000305" key="3"/>
<proteinExistence type="inferred from homology"/>